<gene>
    <name evidence="1" type="primary">uvrB</name>
    <name type="ordered locus">VV1_3092</name>
</gene>
<name>UVRB_VIBVU</name>
<sequence>MSKLYDLVSDYAPSGDQPTAIKQLTEGLDAGLAHQTLLGVTGSGKTFTLANVIAQAQRPAILLAPNKTLAAQLYGEMKAFFPNNAVEYFVSYYDYYQPEAYVPTTDTFIEKDSSVNAHIEQMRLSATKALLERKDAIIVASVSAIYGLGDPEAYLQMMLHIRRGDVMDQRDILRRLAELQYSRNDIAFERGQFRVRGEVIDVFPAESDQDAVRIEMFDDEIDCISVFDPLTGVVKQRDLPRFTIYPKTHYVTPRERILQAIENIKQELRERQTYLRDNNKLLEEQRISQRTQFDIEMMNELGFCSGIENYSRYLSGRAEGEPPPTLFDYLPHDGLLIIDESHVTVPQIGAMYKGDRSRKETLVEYGFRLPSALDNRPLKFEEFEALAPQTIFVSATPGNYELEKSAGEIADQVVRPTGLLDPVLEVRPVATQVDDLLSEIRIRAVKDERVLVTTLTKRMAEDLTEYLHEHDVKVRYLHSDIDTVERVEIIRDLRLGEFDVLVGINLLREGLDMPEVSLVAILDADKEGFLRSERSLIQTIGRAARNLHGKAILYADSITKSMKKAMDETERRREKQQAYNEKMGIQPQALKRNIKDIMELGDITKSRKQKVSKTVPLSKVAEPSLSYNVLTPQQLEKEITKLEAQMYKHAQDLEFELAAQKRDEIEKLRQQFIANS</sequence>
<reference key="1">
    <citation type="submission" date="2002-12" db="EMBL/GenBank/DDBJ databases">
        <title>Complete genome sequence of Vibrio vulnificus CMCP6.</title>
        <authorList>
            <person name="Rhee J.H."/>
            <person name="Kim S.Y."/>
            <person name="Chung S.S."/>
            <person name="Kim J.J."/>
            <person name="Moon Y.H."/>
            <person name="Jeong H."/>
            <person name="Choy H.E."/>
        </authorList>
    </citation>
    <scope>NUCLEOTIDE SEQUENCE [LARGE SCALE GENOMIC DNA]</scope>
    <source>
        <strain>CMCP6</strain>
    </source>
</reference>
<dbReference type="EMBL" id="AE016795">
    <property type="protein sequence ID" value="AAO11415.1"/>
    <property type="molecule type" value="Genomic_DNA"/>
</dbReference>
<dbReference type="RefSeq" id="WP_011080893.1">
    <property type="nucleotide sequence ID" value="NC_004459.3"/>
</dbReference>
<dbReference type="SMR" id="Q8D891"/>
<dbReference type="KEGG" id="vvu:VV1_3092"/>
<dbReference type="HOGENOM" id="CLU_009621_2_1_6"/>
<dbReference type="Proteomes" id="UP000002275">
    <property type="component" value="Chromosome 1"/>
</dbReference>
<dbReference type="GO" id="GO:0005737">
    <property type="term" value="C:cytoplasm"/>
    <property type="evidence" value="ECO:0007669"/>
    <property type="project" value="UniProtKB-SubCell"/>
</dbReference>
<dbReference type="GO" id="GO:0009380">
    <property type="term" value="C:excinuclease repair complex"/>
    <property type="evidence" value="ECO:0007669"/>
    <property type="project" value="InterPro"/>
</dbReference>
<dbReference type="GO" id="GO:0005524">
    <property type="term" value="F:ATP binding"/>
    <property type="evidence" value="ECO:0007669"/>
    <property type="project" value="UniProtKB-UniRule"/>
</dbReference>
<dbReference type="GO" id="GO:0016887">
    <property type="term" value="F:ATP hydrolysis activity"/>
    <property type="evidence" value="ECO:0007669"/>
    <property type="project" value="InterPro"/>
</dbReference>
<dbReference type="GO" id="GO:0003677">
    <property type="term" value="F:DNA binding"/>
    <property type="evidence" value="ECO:0007669"/>
    <property type="project" value="UniProtKB-UniRule"/>
</dbReference>
<dbReference type="GO" id="GO:0009381">
    <property type="term" value="F:excinuclease ABC activity"/>
    <property type="evidence" value="ECO:0007669"/>
    <property type="project" value="UniProtKB-UniRule"/>
</dbReference>
<dbReference type="GO" id="GO:0006289">
    <property type="term" value="P:nucleotide-excision repair"/>
    <property type="evidence" value="ECO:0007669"/>
    <property type="project" value="UniProtKB-UniRule"/>
</dbReference>
<dbReference type="GO" id="GO:0009432">
    <property type="term" value="P:SOS response"/>
    <property type="evidence" value="ECO:0007669"/>
    <property type="project" value="UniProtKB-UniRule"/>
</dbReference>
<dbReference type="CDD" id="cd17916">
    <property type="entry name" value="DEXHc_UvrB"/>
    <property type="match status" value="1"/>
</dbReference>
<dbReference type="CDD" id="cd18790">
    <property type="entry name" value="SF2_C_UvrB"/>
    <property type="match status" value="1"/>
</dbReference>
<dbReference type="FunFam" id="3.40.50.300:FF:000257">
    <property type="entry name" value="UvrABC system protein B"/>
    <property type="match status" value="1"/>
</dbReference>
<dbReference type="FunFam" id="3.40.50.300:FF:000477">
    <property type="entry name" value="UvrABC system protein B"/>
    <property type="match status" value="1"/>
</dbReference>
<dbReference type="Gene3D" id="3.40.50.300">
    <property type="entry name" value="P-loop containing nucleotide triphosphate hydrolases"/>
    <property type="match status" value="3"/>
</dbReference>
<dbReference type="Gene3D" id="4.10.860.10">
    <property type="entry name" value="UVR domain"/>
    <property type="match status" value="1"/>
</dbReference>
<dbReference type="HAMAP" id="MF_00204">
    <property type="entry name" value="UvrB"/>
    <property type="match status" value="1"/>
</dbReference>
<dbReference type="InterPro" id="IPR006935">
    <property type="entry name" value="Helicase/UvrB_N"/>
</dbReference>
<dbReference type="InterPro" id="IPR014001">
    <property type="entry name" value="Helicase_ATP-bd"/>
</dbReference>
<dbReference type="InterPro" id="IPR001650">
    <property type="entry name" value="Helicase_C-like"/>
</dbReference>
<dbReference type="InterPro" id="IPR027417">
    <property type="entry name" value="P-loop_NTPase"/>
</dbReference>
<dbReference type="InterPro" id="IPR001943">
    <property type="entry name" value="UVR_dom"/>
</dbReference>
<dbReference type="InterPro" id="IPR036876">
    <property type="entry name" value="UVR_dom_sf"/>
</dbReference>
<dbReference type="InterPro" id="IPR004807">
    <property type="entry name" value="UvrB"/>
</dbReference>
<dbReference type="InterPro" id="IPR041471">
    <property type="entry name" value="UvrB_inter"/>
</dbReference>
<dbReference type="InterPro" id="IPR024759">
    <property type="entry name" value="UvrB_YAD/RRR_dom"/>
</dbReference>
<dbReference type="NCBIfam" id="NF003673">
    <property type="entry name" value="PRK05298.1"/>
    <property type="match status" value="1"/>
</dbReference>
<dbReference type="NCBIfam" id="TIGR00631">
    <property type="entry name" value="uvrb"/>
    <property type="match status" value="1"/>
</dbReference>
<dbReference type="PANTHER" id="PTHR24029">
    <property type="entry name" value="UVRABC SYSTEM PROTEIN B"/>
    <property type="match status" value="1"/>
</dbReference>
<dbReference type="PANTHER" id="PTHR24029:SF0">
    <property type="entry name" value="UVRABC SYSTEM PROTEIN B"/>
    <property type="match status" value="1"/>
</dbReference>
<dbReference type="Pfam" id="PF00271">
    <property type="entry name" value="Helicase_C"/>
    <property type="match status" value="1"/>
</dbReference>
<dbReference type="Pfam" id="PF04851">
    <property type="entry name" value="ResIII"/>
    <property type="match status" value="1"/>
</dbReference>
<dbReference type="Pfam" id="PF02151">
    <property type="entry name" value="UVR"/>
    <property type="match status" value="1"/>
</dbReference>
<dbReference type="Pfam" id="PF12344">
    <property type="entry name" value="UvrB"/>
    <property type="match status" value="1"/>
</dbReference>
<dbReference type="Pfam" id="PF17757">
    <property type="entry name" value="UvrB_inter"/>
    <property type="match status" value="1"/>
</dbReference>
<dbReference type="SMART" id="SM00487">
    <property type="entry name" value="DEXDc"/>
    <property type="match status" value="1"/>
</dbReference>
<dbReference type="SMART" id="SM00490">
    <property type="entry name" value="HELICc"/>
    <property type="match status" value="1"/>
</dbReference>
<dbReference type="SUPFAM" id="SSF46600">
    <property type="entry name" value="C-terminal UvrC-binding domain of UvrB"/>
    <property type="match status" value="1"/>
</dbReference>
<dbReference type="SUPFAM" id="SSF52540">
    <property type="entry name" value="P-loop containing nucleoside triphosphate hydrolases"/>
    <property type="match status" value="2"/>
</dbReference>
<dbReference type="PROSITE" id="PS51192">
    <property type="entry name" value="HELICASE_ATP_BIND_1"/>
    <property type="match status" value="1"/>
</dbReference>
<dbReference type="PROSITE" id="PS51194">
    <property type="entry name" value="HELICASE_CTER"/>
    <property type="match status" value="1"/>
</dbReference>
<dbReference type="PROSITE" id="PS50151">
    <property type="entry name" value="UVR"/>
    <property type="match status" value="1"/>
</dbReference>
<protein>
    <recommendedName>
        <fullName evidence="1">UvrABC system protein B</fullName>
        <shortName evidence="1">Protein UvrB</shortName>
    </recommendedName>
    <alternativeName>
        <fullName evidence="1">Excinuclease ABC subunit B</fullName>
    </alternativeName>
</protein>
<organism>
    <name type="scientific">Vibrio vulnificus (strain CMCP6)</name>
    <dbReference type="NCBI Taxonomy" id="216895"/>
    <lineage>
        <taxon>Bacteria</taxon>
        <taxon>Pseudomonadati</taxon>
        <taxon>Pseudomonadota</taxon>
        <taxon>Gammaproteobacteria</taxon>
        <taxon>Vibrionales</taxon>
        <taxon>Vibrionaceae</taxon>
        <taxon>Vibrio</taxon>
    </lineage>
</organism>
<feature type="chain" id="PRO_0000138445" description="UvrABC system protein B">
    <location>
        <begin position="1"/>
        <end position="676"/>
    </location>
</feature>
<feature type="domain" description="Helicase ATP-binding" evidence="1">
    <location>
        <begin position="26"/>
        <end position="414"/>
    </location>
</feature>
<feature type="domain" description="Helicase C-terminal" evidence="1">
    <location>
        <begin position="432"/>
        <end position="598"/>
    </location>
</feature>
<feature type="domain" description="UVR" evidence="1">
    <location>
        <begin position="636"/>
        <end position="671"/>
    </location>
</feature>
<feature type="short sequence motif" description="Beta-hairpin">
    <location>
        <begin position="92"/>
        <end position="115"/>
    </location>
</feature>
<feature type="binding site" evidence="1">
    <location>
        <begin position="39"/>
        <end position="46"/>
    </location>
    <ligand>
        <name>ATP</name>
        <dbReference type="ChEBI" id="CHEBI:30616"/>
    </ligand>
</feature>
<keyword id="KW-0067">ATP-binding</keyword>
<keyword id="KW-0963">Cytoplasm</keyword>
<keyword id="KW-0227">DNA damage</keyword>
<keyword id="KW-0228">DNA excision</keyword>
<keyword id="KW-0234">DNA repair</keyword>
<keyword id="KW-0267">Excision nuclease</keyword>
<keyword id="KW-0547">Nucleotide-binding</keyword>
<keyword id="KW-0742">SOS response</keyword>
<comment type="function">
    <text evidence="1">The UvrABC repair system catalyzes the recognition and processing of DNA lesions. A damage recognition complex composed of 2 UvrA and 2 UvrB subunits scans DNA for abnormalities. Upon binding of the UvrA(2)B(2) complex to a putative damaged site, the DNA wraps around one UvrB monomer. DNA wrap is dependent on ATP binding by UvrB and probably causes local melting of the DNA helix, facilitating insertion of UvrB beta-hairpin between the DNA strands. Then UvrB probes one DNA strand for the presence of a lesion. If a lesion is found the UvrA subunits dissociate and the UvrB-DNA preincision complex is formed. This complex is subsequently bound by UvrC and the second UvrB is released. If no lesion is found, the DNA wraps around the other UvrB subunit that will check the other stand for damage.</text>
</comment>
<comment type="subunit">
    <text evidence="1">Forms a heterotetramer with UvrA during the search for lesions. Interacts with UvrC in an incision complex.</text>
</comment>
<comment type="subcellular location">
    <subcellularLocation>
        <location evidence="1">Cytoplasm</location>
    </subcellularLocation>
</comment>
<comment type="domain">
    <text evidence="1">The beta-hairpin motif is involved in DNA binding.</text>
</comment>
<comment type="similarity">
    <text evidence="1">Belongs to the UvrB family.</text>
</comment>
<evidence type="ECO:0000255" key="1">
    <source>
        <dbReference type="HAMAP-Rule" id="MF_00204"/>
    </source>
</evidence>
<proteinExistence type="inferred from homology"/>
<accession>Q8D891</accession>